<keyword id="KW-0131">Cell cycle</keyword>
<keyword id="KW-0132">Cell division</keyword>
<keyword id="KW-0997">Cell inner membrane</keyword>
<keyword id="KW-1003">Cell membrane</keyword>
<keyword id="KW-0472">Membrane</keyword>
<keyword id="KW-1185">Reference proteome</keyword>
<keyword id="KW-0812">Transmembrane</keyword>
<keyword id="KW-1133">Transmembrane helix</keyword>
<name>FTSQ_NOVAD</name>
<accession>Q2G991</accession>
<reference key="1">
    <citation type="submission" date="2006-01" db="EMBL/GenBank/DDBJ databases">
        <title>Complete sequence of Novosphingobium aromaticivorans DSM 12444.</title>
        <authorList>
            <consortium name="US DOE Joint Genome Institute"/>
            <person name="Copeland A."/>
            <person name="Lucas S."/>
            <person name="Lapidus A."/>
            <person name="Barry K."/>
            <person name="Detter J.C."/>
            <person name="Glavina T."/>
            <person name="Hammon N."/>
            <person name="Israni S."/>
            <person name="Pitluck S."/>
            <person name="Chain P."/>
            <person name="Malfatti S."/>
            <person name="Shin M."/>
            <person name="Vergez L."/>
            <person name="Schmutz J."/>
            <person name="Larimer F."/>
            <person name="Land M."/>
            <person name="Kyrpides N."/>
            <person name="Ivanova N."/>
            <person name="Fredrickson J."/>
            <person name="Balkwill D."/>
            <person name="Romine M.F."/>
            <person name="Richardson P."/>
        </authorList>
    </citation>
    <scope>NUCLEOTIDE SEQUENCE [LARGE SCALE GENOMIC DNA]</scope>
    <source>
        <strain>ATCC 700278 / DSM 12444 / CCUG 56034 / CIP 105152 / NBRC 16084 / F199</strain>
    </source>
</reference>
<dbReference type="EMBL" id="CP000248">
    <property type="protein sequence ID" value="ABD25582.1"/>
    <property type="molecule type" value="Genomic_DNA"/>
</dbReference>
<dbReference type="RefSeq" id="WP_011444796.1">
    <property type="nucleotide sequence ID" value="NC_007794.1"/>
</dbReference>
<dbReference type="SMR" id="Q2G991"/>
<dbReference type="STRING" id="279238.Saro_1137"/>
<dbReference type="KEGG" id="nar:Saro_1137"/>
<dbReference type="eggNOG" id="COG1589">
    <property type="taxonomic scope" value="Bacteria"/>
</dbReference>
<dbReference type="HOGENOM" id="CLU_061141_1_0_5"/>
<dbReference type="Proteomes" id="UP000009134">
    <property type="component" value="Chromosome"/>
</dbReference>
<dbReference type="GO" id="GO:0032153">
    <property type="term" value="C:cell division site"/>
    <property type="evidence" value="ECO:0007669"/>
    <property type="project" value="UniProtKB-UniRule"/>
</dbReference>
<dbReference type="GO" id="GO:0005886">
    <property type="term" value="C:plasma membrane"/>
    <property type="evidence" value="ECO:0007669"/>
    <property type="project" value="UniProtKB-SubCell"/>
</dbReference>
<dbReference type="GO" id="GO:0090529">
    <property type="term" value="P:cell septum assembly"/>
    <property type="evidence" value="ECO:0007669"/>
    <property type="project" value="InterPro"/>
</dbReference>
<dbReference type="GO" id="GO:0043093">
    <property type="term" value="P:FtsZ-dependent cytokinesis"/>
    <property type="evidence" value="ECO:0007669"/>
    <property type="project" value="UniProtKB-UniRule"/>
</dbReference>
<dbReference type="Gene3D" id="3.10.20.310">
    <property type="entry name" value="membrane protein fhac"/>
    <property type="match status" value="1"/>
</dbReference>
<dbReference type="HAMAP" id="MF_00911">
    <property type="entry name" value="FtsQ_subfam"/>
    <property type="match status" value="1"/>
</dbReference>
<dbReference type="InterPro" id="IPR005548">
    <property type="entry name" value="Cell_div_FtsQ/DivIB_C"/>
</dbReference>
<dbReference type="InterPro" id="IPR026579">
    <property type="entry name" value="FtsQ"/>
</dbReference>
<dbReference type="InterPro" id="IPR034746">
    <property type="entry name" value="POTRA"/>
</dbReference>
<dbReference type="InterPro" id="IPR013685">
    <property type="entry name" value="POTRA_FtsQ_type"/>
</dbReference>
<dbReference type="PANTHER" id="PTHR35851">
    <property type="entry name" value="CELL DIVISION PROTEIN FTSQ"/>
    <property type="match status" value="1"/>
</dbReference>
<dbReference type="PANTHER" id="PTHR35851:SF1">
    <property type="entry name" value="CELL DIVISION PROTEIN FTSQ"/>
    <property type="match status" value="1"/>
</dbReference>
<dbReference type="Pfam" id="PF03799">
    <property type="entry name" value="FtsQ_DivIB_C"/>
    <property type="match status" value="1"/>
</dbReference>
<dbReference type="Pfam" id="PF08478">
    <property type="entry name" value="POTRA_1"/>
    <property type="match status" value="1"/>
</dbReference>
<dbReference type="PROSITE" id="PS51779">
    <property type="entry name" value="POTRA"/>
    <property type="match status" value="1"/>
</dbReference>
<sequence length="320" mass="34941">MAQTIKRGGKGVRRATAARSAQRKVQTARQQTGSVLDSVLRWLPFSEETLHRILMTLILAAAAGLVWTVAVMAGIPALVSEQAAIIASDAGFKVSHLEVRGVNRMNEAKIYERILGQNDRAMTTLDLAALRDELNQLPWVKDARVSRKLPDTLVIDIVERTPHAVLRKPDRMVLIDDTGVELESVRADRAKGMLVLSGMGVGQRVEDLTRLLDAAPALKPQVSEAEWVGNRRWNLTFKTGQVLALPEGDETAASALLSFARMDGVNRLLGGKVAAFDMRAPDRIYMRVPGHADEVAAEKRAEEQARAEAKRAASAKSDEG</sequence>
<organism>
    <name type="scientific">Novosphingobium aromaticivorans (strain ATCC 700278 / DSM 12444 / CCUG 56034 / CIP 105152 / NBRC 16084 / F199)</name>
    <dbReference type="NCBI Taxonomy" id="279238"/>
    <lineage>
        <taxon>Bacteria</taxon>
        <taxon>Pseudomonadati</taxon>
        <taxon>Pseudomonadota</taxon>
        <taxon>Alphaproteobacteria</taxon>
        <taxon>Sphingomonadales</taxon>
        <taxon>Sphingomonadaceae</taxon>
        <taxon>Novosphingobium</taxon>
    </lineage>
</organism>
<gene>
    <name evidence="1" type="primary">ftsQ</name>
    <name type="ordered locus">Saro_1137</name>
</gene>
<protein>
    <recommendedName>
        <fullName evidence="1">Cell division protein FtsQ</fullName>
    </recommendedName>
</protein>
<comment type="function">
    <text evidence="1">Essential cell division protein.</text>
</comment>
<comment type="subcellular location">
    <subcellularLocation>
        <location evidence="1">Cell inner membrane</location>
        <topology evidence="1">Single-pass type II membrane protein</topology>
    </subcellularLocation>
    <text evidence="1">Localizes to the division septum.</text>
</comment>
<comment type="similarity">
    <text evidence="1">Belongs to the FtsQ/DivIB family. FtsQ subfamily.</text>
</comment>
<feature type="chain" id="PRO_0000414684" description="Cell division protein FtsQ">
    <location>
        <begin position="1"/>
        <end position="320"/>
    </location>
</feature>
<feature type="topological domain" description="Cytoplasmic" evidence="1">
    <location>
        <begin position="1"/>
        <end position="52"/>
    </location>
</feature>
<feature type="transmembrane region" description="Helical" evidence="1">
    <location>
        <begin position="53"/>
        <end position="73"/>
    </location>
</feature>
<feature type="topological domain" description="Periplasmic" evidence="1">
    <location>
        <begin position="74"/>
        <end position="320"/>
    </location>
</feature>
<feature type="domain" description="POTRA" evidence="2">
    <location>
        <begin position="92"/>
        <end position="160"/>
    </location>
</feature>
<feature type="region of interest" description="Disordered" evidence="3">
    <location>
        <begin position="1"/>
        <end position="24"/>
    </location>
</feature>
<feature type="region of interest" description="Disordered" evidence="3">
    <location>
        <begin position="296"/>
        <end position="320"/>
    </location>
</feature>
<proteinExistence type="inferred from homology"/>
<evidence type="ECO:0000255" key="1">
    <source>
        <dbReference type="HAMAP-Rule" id="MF_00911"/>
    </source>
</evidence>
<evidence type="ECO:0000255" key="2">
    <source>
        <dbReference type="PROSITE-ProRule" id="PRU01115"/>
    </source>
</evidence>
<evidence type="ECO:0000256" key="3">
    <source>
        <dbReference type="SAM" id="MobiDB-lite"/>
    </source>
</evidence>